<feature type="chain" id="PRO_1000088038" description="Putative glutamate--cysteine ligase 2">
    <location>
        <begin position="1"/>
        <end position="372"/>
    </location>
</feature>
<accession>B1IYM7</accession>
<gene>
    <name type="primary">ybdK</name>
    <name type="ordered locus">EcolC_3065</name>
</gene>
<organism>
    <name type="scientific">Escherichia coli (strain ATCC 8739 / DSM 1576 / NBRC 3972 / NCIMB 8545 / WDCM 00012 / Crooks)</name>
    <dbReference type="NCBI Taxonomy" id="481805"/>
    <lineage>
        <taxon>Bacteria</taxon>
        <taxon>Pseudomonadati</taxon>
        <taxon>Pseudomonadota</taxon>
        <taxon>Gammaproteobacteria</taxon>
        <taxon>Enterobacterales</taxon>
        <taxon>Enterobacteriaceae</taxon>
        <taxon>Escherichia</taxon>
    </lineage>
</organism>
<reference key="1">
    <citation type="submission" date="2008-02" db="EMBL/GenBank/DDBJ databases">
        <title>Complete sequence of Escherichia coli C str. ATCC 8739.</title>
        <authorList>
            <person name="Copeland A."/>
            <person name="Lucas S."/>
            <person name="Lapidus A."/>
            <person name="Glavina del Rio T."/>
            <person name="Dalin E."/>
            <person name="Tice H."/>
            <person name="Bruce D."/>
            <person name="Goodwin L."/>
            <person name="Pitluck S."/>
            <person name="Kiss H."/>
            <person name="Brettin T."/>
            <person name="Detter J.C."/>
            <person name="Han C."/>
            <person name="Kuske C.R."/>
            <person name="Schmutz J."/>
            <person name="Larimer F."/>
            <person name="Land M."/>
            <person name="Hauser L."/>
            <person name="Kyrpides N."/>
            <person name="Mikhailova N."/>
            <person name="Ingram L."/>
            <person name="Richardson P."/>
        </authorList>
    </citation>
    <scope>NUCLEOTIDE SEQUENCE [LARGE SCALE GENOMIC DNA]</scope>
    <source>
        <strain>ATCC 8739 / DSM 1576 / NBRC 3972 / NCIMB 8545 / WDCM 00012 / Crooks</strain>
    </source>
</reference>
<protein>
    <recommendedName>
        <fullName evidence="1">Putative glutamate--cysteine ligase 2</fullName>
        <ecNumber evidence="1">6.3.2.2</ecNumber>
    </recommendedName>
    <alternativeName>
        <fullName evidence="1">Gamma-glutamylcysteine synthetase 2</fullName>
        <shortName evidence="1">GCS 2</shortName>
        <shortName evidence="1">Gamma-GCS 2</shortName>
    </alternativeName>
</protein>
<comment type="function">
    <text evidence="1">ATP-dependent carboxylate-amine ligase which exhibits weak glutamate--cysteine ligase activity.</text>
</comment>
<comment type="catalytic activity">
    <reaction evidence="1">
        <text>L-cysteine + L-glutamate + ATP = gamma-L-glutamyl-L-cysteine + ADP + phosphate + H(+)</text>
        <dbReference type="Rhea" id="RHEA:13285"/>
        <dbReference type="ChEBI" id="CHEBI:15378"/>
        <dbReference type="ChEBI" id="CHEBI:29985"/>
        <dbReference type="ChEBI" id="CHEBI:30616"/>
        <dbReference type="ChEBI" id="CHEBI:35235"/>
        <dbReference type="ChEBI" id="CHEBI:43474"/>
        <dbReference type="ChEBI" id="CHEBI:58173"/>
        <dbReference type="ChEBI" id="CHEBI:456216"/>
        <dbReference type="EC" id="6.3.2.2"/>
    </reaction>
</comment>
<comment type="subunit">
    <text evidence="1">Homodimer.</text>
</comment>
<comment type="similarity">
    <text evidence="1">Belongs to the glutamate--cysteine ligase type 2 family. YbdK subfamily.</text>
</comment>
<proteinExistence type="inferred from homology"/>
<sequence length="372" mass="41688">MPLPDFHVSEPFTLGIELEMQVVNPPGYDLSQDSSMLIDAVKNKITAGEVKHDITESMLELATDVCRDINQAAGQFSAMQKVVLQAATDHHLEICGGGTHPFQKWQRQEVCDNERYQRTLENFGYLIQQATVFGQHVHVGCASGDDAIYLLHGLSRFVPHFIALSAASPYMQGTDTRFASSRPNIFSAFPDNGPMPWVSNWQQFEALFRCLSYTTMIDSIKDLHWDIRPSPHFGTVEVRVMDTPLTLSHAVNMAGLIQATAHWLLTERPFKHQEKDYLLYKFNRFQACRYGLEGVITDPHTGDRRPLTEDTLRLLEKIAPSAHKIGASSAIEALHRQVVSGLNEAQLMRDFVADGGSLIGLVKKHCEIWAGD</sequence>
<dbReference type="EC" id="6.3.2.2" evidence="1"/>
<dbReference type="EMBL" id="CP000946">
    <property type="protein sequence ID" value="ACA78689.1"/>
    <property type="molecule type" value="Genomic_DNA"/>
</dbReference>
<dbReference type="RefSeq" id="WP_001130654.1">
    <property type="nucleotide sequence ID" value="NZ_MTFT01000053.1"/>
</dbReference>
<dbReference type="SMR" id="B1IYM7"/>
<dbReference type="KEGG" id="ecl:EcolC_3065"/>
<dbReference type="HOGENOM" id="CLU_044848_1_1_6"/>
<dbReference type="GO" id="GO:0005524">
    <property type="term" value="F:ATP binding"/>
    <property type="evidence" value="ECO:0007669"/>
    <property type="project" value="UniProtKB-KW"/>
</dbReference>
<dbReference type="GO" id="GO:0004357">
    <property type="term" value="F:glutamate-cysteine ligase activity"/>
    <property type="evidence" value="ECO:0007669"/>
    <property type="project" value="UniProtKB-EC"/>
</dbReference>
<dbReference type="GO" id="GO:0042398">
    <property type="term" value="P:modified amino acid biosynthetic process"/>
    <property type="evidence" value="ECO:0007669"/>
    <property type="project" value="InterPro"/>
</dbReference>
<dbReference type="FunFam" id="3.30.590.20:FF:000002">
    <property type="entry name" value="Putative glutamate--cysteine ligase 2"/>
    <property type="match status" value="1"/>
</dbReference>
<dbReference type="Gene3D" id="3.30.590.20">
    <property type="match status" value="1"/>
</dbReference>
<dbReference type="HAMAP" id="MF_01609">
    <property type="entry name" value="Glu_cys_ligase_2"/>
    <property type="match status" value="1"/>
</dbReference>
<dbReference type="InterPro" id="IPR050141">
    <property type="entry name" value="GCL_type2/YbdK_subfam"/>
</dbReference>
<dbReference type="InterPro" id="IPR006336">
    <property type="entry name" value="GCS2"/>
</dbReference>
<dbReference type="InterPro" id="IPR014746">
    <property type="entry name" value="Gln_synth/guanido_kin_cat_dom"/>
</dbReference>
<dbReference type="InterPro" id="IPR011793">
    <property type="entry name" value="YbdK"/>
</dbReference>
<dbReference type="NCBIfam" id="TIGR02050">
    <property type="entry name" value="gshA_cyan_rel"/>
    <property type="match status" value="1"/>
</dbReference>
<dbReference type="NCBIfam" id="NF010040">
    <property type="entry name" value="PRK13516.1"/>
    <property type="match status" value="1"/>
</dbReference>
<dbReference type="PANTHER" id="PTHR36510">
    <property type="entry name" value="GLUTAMATE--CYSTEINE LIGASE 2-RELATED"/>
    <property type="match status" value="1"/>
</dbReference>
<dbReference type="PANTHER" id="PTHR36510:SF1">
    <property type="entry name" value="GLUTAMATE--CYSTEINE LIGASE 2-RELATED"/>
    <property type="match status" value="1"/>
</dbReference>
<dbReference type="Pfam" id="PF04107">
    <property type="entry name" value="GCS2"/>
    <property type="match status" value="1"/>
</dbReference>
<dbReference type="SUPFAM" id="SSF55931">
    <property type="entry name" value="Glutamine synthetase/guanido kinase"/>
    <property type="match status" value="1"/>
</dbReference>
<evidence type="ECO:0000255" key="1">
    <source>
        <dbReference type="HAMAP-Rule" id="MF_01609"/>
    </source>
</evidence>
<name>GCS2_ECOLC</name>
<keyword id="KW-0067">ATP-binding</keyword>
<keyword id="KW-0436">Ligase</keyword>
<keyword id="KW-0547">Nucleotide-binding</keyword>